<comment type="function">
    <text evidence="1">Redox regulated molecular chaperone. Protects both thermally unfolding and oxidatively damaged proteins from irreversible aggregation. Plays an important role in the bacterial defense system toward oxidative stress.</text>
</comment>
<comment type="subcellular location">
    <subcellularLocation>
        <location evidence="1">Cytoplasm</location>
    </subcellularLocation>
</comment>
<comment type="PTM">
    <text evidence="1">Under oxidizing conditions two disulfide bonds are formed involving the reactive cysteines. Under reducing conditions zinc is bound to the reactive cysteines and the protein is inactive.</text>
</comment>
<comment type="similarity">
    <text evidence="1">Belongs to the HSP33 family.</text>
</comment>
<reference key="1">
    <citation type="submission" date="2007-04" db="EMBL/GenBank/DDBJ databases">
        <title>Complete sequence of Pseudomonas mendocina ymp.</title>
        <authorList>
            <consortium name="US DOE Joint Genome Institute"/>
            <person name="Copeland A."/>
            <person name="Lucas S."/>
            <person name="Lapidus A."/>
            <person name="Barry K."/>
            <person name="Glavina del Rio T."/>
            <person name="Dalin E."/>
            <person name="Tice H."/>
            <person name="Pitluck S."/>
            <person name="Kiss H."/>
            <person name="Brettin T."/>
            <person name="Detter J.C."/>
            <person name="Bruce D."/>
            <person name="Han C."/>
            <person name="Schmutz J."/>
            <person name="Larimer F."/>
            <person name="Land M."/>
            <person name="Hauser L."/>
            <person name="Kyrpides N."/>
            <person name="Mikhailova N."/>
            <person name="Hersman L."/>
            <person name="Dubois J."/>
            <person name="Maurice P."/>
            <person name="Richardson P."/>
        </authorList>
    </citation>
    <scope>NUCLEOTIDE SEQUENCE [LARGE SCALE GENOMIC DNA]</scope>
    <source>
        <strain>ymp</strain>
    </source>
</reference>
<proteinExistence type="inferred from homology"/>
<name>HSLO_ECTM1</name>
<protein>
    <recommendedName>
        <fullName evidence="1">33 kDa chaperonin</fullName>
    </recommendedName>
    <alternativeName>
        <fullName evidence="1">Heat shock protein 33 homolog</fullName>
        <shortName evidence="1">HSP33</shortName>
    </alternativeName>
</protein>
<dbReference type="EMBL" id="CP000680">
    <property type="protein sequence ID" value="ABP83140.1"/>
    <property type="molecule type" value="Genomic_DNA"/>
</dbReference>
<dbReference type="SMR" id="A4XP74"/>
<dbReference type="STRING" id="399739.Pmen_0367"/>
<dbReference type="KEGG" id="pmy:Pmen_0367"/>
<dbReference type="PATRIC" id="fig|399739.8.peg.376"/>
<dbReference type="eggNOG" id="COG1281">
    <property type="taxonomic scope" value="Bacteria"/>
</dbReference>
<dbReference type="HOGENOM" id="CLU_054493_0_0_6"/>
<dbReference type="OrthoDB" id="9793753at2"/>
<dbReference type="GO" id="GO:0005737">
    <property type="term" value="C:cytoplasm"/>
    <property type="evidence" value="ECO:0007669"/>
    <property type="project" value="UniProtKB-SubCell"/>
</dbReference>
<dbReference type="GO" id="GO:0044183">
    <property type="term" value="F:protein folding chaperone"/>
    <property type="evidence" value="ECO:0007669"/>
    <property type="project" value="TreeGrafter"/>
</dbReference>
<dbReference type="GO" id="GO:0051082">
    <property type="term" value="F:unfolded protein binding"/>
    <property type="evidence" value="ECO:0007669"/>
    <property type="project" value="UniProtKB-UniRule"/>
</dbReference>
<dbReference type="GO" id="GO:0042026">
    <property type="term" value="P:protein refolding"/>
    <property type="evidence" value="ECO:0007669"/>
    <property type="project" value="TreeGrafter"/>
</dbReference>
<dbReference type="CDD" id="cd00498">
    <property type="entry name" value="Hsp33"/>
    <property type="match status" value="1"/>
</dbReference>
<dbReference type="Gene3D" id="1.10.287.480">
    <property type="entry name" value="helix hairpin bin"/>
    <property type="match status" value="1"/>
</dbReference>
<dbReference type="Gene3D" id="3.55.30.10">
    <property type="entry name" value="Hsp33 domain"/>
    <property type="match status" value="1"/>
</dbReference>
<dbReference type="Gene3D" id="3.90.1280.10">
    <property type="entry name" value="HSP33 redox switch-like"/>
    <property type="match status" value="1"/>
</dbReference>
<dbReference type="HAMAP" id="MF_00117">
    <property type="entry name" value="HslO"/>
    <property type="match status" value="1"/>
</dbReference>
<dbReference type="InterPro" id="IPR000397">
    <property type="entry name" value="Heat_shock_Hsp33"/>
</dbReference>
<dbReference type="InterPro" id="IPR016154">
    <property type="entry name" value="Heat_shock_Hsp33_C"/>
</dbReference>
<dbReference type="InterPro" id="IPR016153">
    <property type="entry name" value="Heat_shock_Hsp33_N"/>
</dbReference>
<dbReference type="InterPro" id="IPR023212">
    <property type="entry name" value="Hsp33_helix_hairpin_bin_dom_sf"/>
</dbReference>
<dbReference type="NCBIfam" id="NF001033">
    <property type="entry name" value="PRK00114.1"/>
    <property type="match status" value="1"/>
</dbReference>
<dbReference type="PANTHER" id="PTHR30111">
    <property type="entry name" value="33 KDA CHAPERONIN"/>
    <property type="match status" value="1"/>
</dbReference>
<dbReference type="PANTHER" id="PTHR30111:SF1">
    <property type="entry name" value="33 KDA CHAPERONIN"/>
    <property type="match status" value="1"/>
</dbReference>
<dbReference type="Pfam" id="PF01430">
    <property type="entry name" value="HSP33"/>
    <property type="match status" value="1"/>
</dbReference>
<dbReference type="PIRSF" id="PIRSF005261">
    <property type="entry name" value="Heat_shock_Hsp33"/>
    <property type="match status" value="1"/>
</dbReference>
<dbReference type="SUPFAM" id="SSF64397">
    <property type="entry name" value="Hsp33 domain"/>
    <property type="match status" value="1"/>
</dbReference>
<dbReference type="SUPFAM" id="SSF118352">
    <property type="entry name" value="HSP33 redox switch-like"/>
    <property type="match status" value="1"/>
</dbReference>
<evidence type="ECO:0000255" key="1">
    <source>
        <dbReference type="HAMAP-Rule" id="MF_00117"/>
    </source>
</evidence>
<sequence length="295" mass="32541">MNDFSQRFLFDDTDVRGEMVALRESYAHVLAKHAYPQPVAQLLGEMMAAAALLVGTLKFDGLLVLQARAEGPLSLLMVECSSARELRGIARYDAEQIGADADLQSLMPNGVLAITIDPSRGQRYQGIVDLDGVDLAECLSNYFASSEQLPTRFWLKADGQRARGLLLQQLPPHHQSEPQERQESWNHVLTLADTLTAEELLGLDNPTLLHRLYHQENVRLFDEQPLQFRCSCSRERSASALASLGQADAELLLAEQGGSVVIDCQFCNERYAFDAADIAQLFAGAGSEAPSQTRH</sequence>
<feature type="chain" id="PRO_1000095027" description="33 kDa chaperonin">
    <location>
        <begin position="1"/>
        <end position="295"/>
    </location>
</feature>
<feature type="disulfide bond" description="Redox-active" evidence="1">
    <location>
        <begin position="230"/>
        <end position="232"/>
    </location>
</feature>
<feature type="disulfide bond" description="Redox-active" evidence="1">
    <location>
        <begin position="264"/>
        <end position="267"/>
    </location>
</feature>
<keyword id="KW-0143">Chaperone</keyword>
<keyword id="KW-0963">Cytoplasm</keyword>
<keyword id="KW-1015">Disulfide bond</keyword>
<keyword id="KW-0676">Redox-active center</keyword>
<keyword id="KW-0862">Zinc</keyword>
<organism>
    <name type="scientific">Ectopseudomonas mendocina (strain ymp)</name>
    <name type="common">Pseudomonas mendocina</name>
    <dbReference type="NCBI Taxonomy" id="399739"/>
    <lineage>
        <taxon>Bacteria</taxon>
        <taxon>Pseudomonadati</taxon>
        <taxon>Pseudomonadota</taxon>
        <taxon>Gammaproteobacteria</taxon>
        <taxon>Pseudomonadales</taxon>
        <taxon>Pseudomonadaceae</taxon>
        <taxon>Ectopseudomonas</taxon>
    </lineage>
</organism>
<gene>
    <name evidence="1" type="primary">hslO</name>
    <name type="ordered locus">Pmen_0367</name>
</gene>
<accession>A4XP74</accession>